<proteinExistence type="evidence at protein level"/>
<organism>
    <name type="scientific">Arabidopsis thaliana</name>
    <name type="common">Mouse-ear cress</name>
    <dbReference type="NCBI Taxonomy" id="3702"/>
    <lineage>
        <taxon>Eukaryota</taxon>
        <taxon>Viridiplantae</taxon>
        <taxon>Streptophyta</taxon>
        <taxon>Embryophyta</taxon>
        <taxon>Tracheophyta</taxon>
        <taxon>Spermatophyta</taxon>
        <taxon>Magnoliopsida</taxon>
        <taxon>eudicotyledons</taxon>
        <taxon>Gunneridae</taxon>
        <taxon>Pentapetalae</taxon>
        <taxon>rosids</taxon>
        <taxon>malvids</taxon>
        <taxon>Brassicales</taxon>
        <taxon>Brassicaceae</taxon>
        <taxon>Camelineae</taxon>
        <taxon>Arabidopsis</taxon>
    </lineage>
</organism>
<evidence type="ECO:0000250" key="1">
    <source>
        <dbReference type="UniProtKB" id="P68137"/>
    </source>
</evidence>
<evidence type="ECO:0000305" key="2"/>
<evidence type="ECO:0007744" key="3">
    <source>
    </source>
</evidence>
<protein>
    <recommendedName>
        <fullName>Actin-2</fullName>
        <ecNumber evidence="1">3.6.4.-</ecNumber>
    </recommendedName>
</protein>
<accession>Q96292</accession>
<accession>Q42056</accession>
<dbReference type="EC" id="3.6.4.-" evidence="1"/>
<dbReference type="EMBL" id="U41998">
    <property type="protein sequence ID" value="AAB37098.1"/>
    <property type="molecule type" value="Genomic_DNA"/>
</dbReference>
<dbReference type="EMBL" id="AB026654">
    <property type="protein sequence ID" value="BAB01806.1"/>
    <property type="molecule type" value="Genomic_DNA"/>
</dbReference>
<dbReference type="EMBL" id="CP002686">
    <property type="protein sequence ID" value="AEE76148.1"/>
    <property type="molecule type" value="Genomic_DNA"/>
</dbReference>
<dbReference type="EMBL" id="CP002686">
    <property type="protein sequence ID" value="ANM65915.1"/>
    <property type="molecule type" value="Genomic_DNA"/>
</dbReference>
<dbReference type="EMBL" id="AF428330">
    <property type="protein sequence ID" value="AAL16260.1"/>
    <property type="molecule type" value="mRNA"/>
</dbReference>
<dbReference type="EMBL" id="AY064043">
    <property type="protein sequence ID" value="AAL36399.1"/>
    <property type="molecule type" value="mRNA"/>
</dbReference>
<dbReference type="EMBL" id="AY096381">
    <property type="protein sequence ID" value="AAM20022.1"/>
    <property type="molecule type" value="mRNA"/>
</dbReference>
<dbReference type="EMBL" id="AY087751">
    <property type="protein sequence ID" value="AAM65287.1"/>
    <property type="molecule type" value="mRNA"/>
</dbReference>
<dbReference type="EMBL" id="Z25952">
    <property type="protein sequence ID" value="CAA81112.1"/>
    <property type="molecule type" value="mRNA"/>
</dbReference>
<dbReference type="RefSeq" id="NP_001327851.1">
    <molecule id="Q96292-1"/>
    <property type="nucleotide sequence ID" value="NM_001338359.1"/>
</dbReference>
<dbReference type="RefSeq" id="NP_188508.1">
    <molecule id="Q96292-1"/>
    <property type="nucleotide sequence ID" value="NM_112764.4"/>
</dbReference>
<dbReference type="SMR" id="Q96292"/>
<dbReference type="BioGRID" id="6744">
    <property type="interactions" value="15"/>
</dbReference>
<dbReference type="FunCoup" id="Q96292">
    <property type="interactions" value="2164"/>
</dbReference>
<dbReference type="IntAct" id="Q96292">
    <property type="interactions" value="9"/>
</dbReference>
<dbReference type="STRING" id="3702.Q96292"/>
<dbReference type="iPTMnet" id="Q96292"/>
<dbReference type="PaxDb" id="3702-AT3G18780.2"/>
<dbReference type="ProteomicsDB" id="244709">
    <molecule id="Q96292-1"/>
</dbReference>
<dbReference type="EnsemblPlants" id="AT3G18780.2">
    <molecule id="Q96292-1"/>
    <property type="protein sequence ID" value="AT3G18780.2"/>
    <property type="gene ID" value="AT3G18780"/>
</dbReference>
<dbReference type="EnsemblPlants" id="AT3G18780.3">
    <molecule id="Q96292-1"/>
    <property type="protein sequence ID" value="AT3G18780.3"/>
    <property type="gene ID" value="AT3G18780"/>
</dbReference>
<dbReference type="GeneID" id="821411"/>
<dbReference type="Gramene" id="AT3G18780.2">
    <molecule id="Q96292-1"/>
    <property type="protein sequence ID" value="AT3G18780.2"/>
    <property type="gene ID" value="AT3G18780"/>
</dbReference>
<dbReference type="Gramene" id="AT3G18780.3">
    <molecule id="Q96292-1"/>
    <property type="protein sequence ID" value="AT3G18780.3"/>
    <property type="gene ID" value="AT3G18780"/>
</dbReference>
<dbReference type="KEGG" id="ath:AT3G18780"/>
<dbReference type="Araport" id="AT3G18780"/>
<dbReference type="TAIR" id="AT3G18780">
    <property type="gene designation" value="ACT2"/>
</dbReference>
<dbReference type="eggNOG" id="KOG0676">
    <property type="taxonomic scope" value="Eukaryota"/>
</dbReference>
<dbReference type="HOGENOM" id="CLU_027965_0_2_1"/>
<dbReference type="InParanoid" id="Q96292"/>
<dbReference type="OMA" id="PXMESAG"/>
<dbReference type="OrthoDB" id="1026493at2759"/>
<dbReference type="PhylomeDB" id="Q96292"/>
<dbReference type="CD-CODE" id="4299E36E">
    <property type="entry name" value="Nucleolus"/>
</dbReference>
<dbReference type="PRO" id="PR:Q96292"/>
<dbReference type="Proteomes" id="UP000006548">
    <property type="component" value="Chromosome 3"/>
</dbReference>
<dbReference type="ExpressionAtlas" id="Q96292">
    <property type="expression patterns" value="baseline and differential"/>
</dbReference>
<dbReference type="GO" id="GO:0005737">
    <property type="term" value="C:cytoplasm"/>
    <property type="evidence" value="ECO:0000314"/>
    <property type="project" value="TAIR"/>
</dbReference>
<dbReference type="GO" id="GO:0005856">
    <property type="term" value="C:cytoskeleton"/>
    <property type="evidence" value="ECO:0007669"/>
    <property type="project" value="UniProtKB-SubCell"/>
</dbReference>
<dbReference type="GO" id="GO:0005829">
    <property type="term" value="C:cytosol"/>
    <property type="evidence" value="ECO:0007005"/>
    <property type="project" value="TAIR"/>
</dbReference>
<dbReference type="GO" id="GO:0005634">
    <property type="term" value="C:nucleus"/>
    <property type="evidence" value="ECO:0007005"/>
    <property type="project" value="TAIR"/>
</dbReference>
<dbReference type="GO" id="GO:0005524">
    <property type="term" value="F:ATP binding"/>
    <property type="evidence" value="ECO:0007669"/>
    <property type="project" value="UniProtKB-KW"/>
</dbReference>
<dbReference type="GO" id="GO:0016787">
    <property type="term" value="F:hydrolase activity"/>
    <property type="evidence" value="ECO:0007669"/>
    <property type="project" value="UniProtKB-KW"/>
</dbReference>
<dbReference type="GO" id="GO:0005200">
    <property type="term" value="F:structural constituent of cytoskeleton"/>
    <property type="evidence" value="ECO:0000304"/>
    <property type="project" value="TAIR"/>
</dbReference>
<dbReference type="GO" id="GO:0009735">
    <property type="term" value="P:response to cytokinin"/>
    <property type="evidence" value="ECO:0000270"/>
    <property type="project" value="TAIR"/>
</dbReference>
<dbReference type="GO" id="GO:0010218">
    <property type="term" value="P:response to far red light"/>
    <property type="evidence" value="ECO:0000270"/>
    <property type="project" value="TAIR"/>
</dbReference>
<dbReference type="GO" id="GO:0009644">
    <property type="term" value="P:response to high light intensity"/>
    <property type="evidence" value="ECO:0000270"/>
    <property type="project" value="TAIR"/>
</dbReference>
<dbReference type="GO" id="GO:0010114">
    <property type="term" value="P:response to red light"/>
    <property type="evidence" value="ECO:0000270"/>
    <property type="project" value="TAIR"/>
</dbReference>
<dbReference type="GO" id="GO:0010053">
    <property type="term" value="P:root epidermal cell differentiation"/>
    <property type="evidence" value="ECO:0000315"/>
    <property type="project" value="TAIR"/>
</dbReference>
<dbReference type="GO" id="GO:0048768">
    <property type="term" value="P:root hair cell tip growth"/>
    <property type="evidence" value="ECO:0000315"/>
    <property type="project" value="TAIR"/>
</dbReference>
<dbReference type="GO" id="GO:0048767">
    <property type="term" value="P:root hair elongation"/>
    <property type="evidence" value="ECO:0000315"/>
    <property type="project" value="TAIR"/>
</dbReference>
<dbReference type="CDD" id="cd10224">
    <property type="entry name" value="ASKHA_NBD_actin"/>
    <property type="match status" value="1"/>
</dbReference>
<dbReference type="FunFam" id="3.30.420.40:FF:000291">
    <property type="entry name" value="Actin, alpha skeletal muscle"/>
    <property type="match status" value="1"/>
</dbReference>
<dbReference type="FunFam" id="3.90.640.10:FF:000001">
    <property type="entry name" value="Actin, muscle"/>
    <property type="match status" value="1"/>
</dbReference>
<dbReference type="FunFam" id="3.30.420.40:FF:000404">
    <property type="entry name" value="Major actin"/>
    <property type="match status" value="1"/>
</dbReference>
<dbReference type="FunFam" id="3.30.420.40:FF:000058">
    <property type="entry name" value="Putative actin-related protein 5"/>
    <property type="match status" value="1"/>
</dbReference>
<dbReference type="Gene3D" id="3.30.420.40">
    <property type="match status" value="2"/>
</dbReference>
<dbReference type="Gene3D" id="3.90.640.10">
    <property type="entry name" value="Actin, Chain A, domain 4"/>
    <property type="match status" value="1"/>
</dbReference>
<dbReference type="InterPro" id="IPR004000">
    <property type="entry name" value="Actin"/>
</dbReference>
<dbReference type="InterPro" id="IPR020902">
    <property type="entry name" value="Actin/actin-like_CS"/>
</dbReference>
<dbReference type="InterPro" id="IPR004001">
    <property type="entry name" value="Actin_CS"/>
</dbReference>
<dbReference type="InterPro" id="IPR043129">
    <property type="entry name" value="ATPase_NBD"/>
</dbReference>
<dbReference type="PANTHER" id="PTHR11937">
    <property type="entry name" value="ACTIN"/>
    <property type="match status" value="1"/>
</dbReference>
<dbReference type="Pfam" id="PF00022">
    <property type="entry name" value="Actin"/>
    <property type="match status" value="1"/>
</dbReference>
<dbReference type="PRINTS" id="PR00190">
    <property type="entry name" value="ACTIN"/>
</dbReference>
<dbReference type="SMART" id="SM00268">
    <property type="entry name" value="ACTIN"/>
    <property type="match status" value="1"/>
</dbReference>
<dbReference type="SUPFAM" id="SSF53067">
    <property type="entry name" value="Actin-like ATPase domain"/>
    <property type="match status" value="2"/>
</dbReference>
<dbReference type="PROSITE" id="PS00406">
    <property type="entry name" value="ACTINS_1"/>
    <property type="match status" value="1"/>
</dbReference>
<dbReference type="PROSITE" id="PS00432">
    <property type="entry name" value="ACTINS_2"/>
    <property type="match status" value="1"/>
</dbReference>
<dbReference type="PROSITE" id="PS01132">
    <property type="entry name" value="ACTINS_ACT_LIKE"/>
    <property type="match status" value="1"/>
</dbReference>
<reference key="1">
    <citation type="journal article" date="1996" name="Plant J.">
        <title>Strong, constitutive expression of the Arabidopsis ACT2/ACT8 actin subclass in vegetative tissues.</title>
        <authorList>
            <person name="An Y.-Q."/>
            <person name="McDowell J.M."/>
            <person name="Huang S."/>
            <person name="McKinney E.C."/>
            <person name="Chambliss S."/>
            <person name="Meagher R.B."/>
        </authorList>
    </citation>
    <scope>NUCLEOTIDE SEQUENCE [GENOMIC DNA]</scope>
</reference>
<reference key="2">
    <citation type="journal article" date="2000" name="DNA Res.">
        <title>Structural analysis of Arabidopsis thaliana chromosome 3. I. Sequence features of the regions of 4,504,864 bp covered by sixty P1 and TAC clones.</title>
        <authorList>
            <person name="Sato S."/>
            <person name="Nakamura Y."/>
            <person name="Kaneko T."/>
            <person name="Katoh T."/>
            <person name="Asamizu E."/>
            <person name="Tabata S."/>
        </authorList>
    </citation>
    <scope>NUCLEOTIDE SEQUENCE [LARGE SCALE GENOMIC DNA]</scope>
    <source>
        <strain>cv. Columbia</strain>
    </source>
</reference>
<reference key="3">
    <citation type="journal article" date="2017" name="Plant J.">
        <title>Araport11: a complete reannotation of the Arabidopsis thaliana reference genome.</title>
        <authorList>
            <person name="Cheng C.Y."/>
            <person name="Krishnakumar V."/>
            <person name="Chan A.P."/>
            <person name="Thibaud-Nissen F."/>
            <person name="Schobel S."/>
            <person name="Town C.D."/>
        </authorList>
    </citation>
    <scope>GENOME REANNOTATION</scope>
    <source>
        <strain>cv. Columbia</strain>
    </source>
</reference>
<reference key="4">
    <citation type="journal article" date="2003" name="Science">
        <title>Empirical analysis of transcriptional activity in the Arabidopsis genome.</title>
        <authorList>
            <person name="Yamada K."/>
            <person name="Lim J."/>
            <person name="Dale J.M."/>
            <person name="Chen H."/>
            <person name="Shinn P."/>
            <person name="Palm C.J."/>
            <person name="Southwick A.M."/>
            <person name="Wu H.C."/>
            <person name="Kim C.J."/>
            <person name="Nguyen M."/>
            <person name="Pham P.K."/>
            <person name="Cheuk R.F."/>
            <person name="Karlin-Newmann G."/>
            <person name="Liu S.X."/>
            <person name="Lam B."/>
            <person name="Sakano H."/>
            <person name="Wu T."/>
            <person name="Yu G."/>
            <person name="Miranda M."/>
            <person name="Quach H.L."/>
            <person name="Tripp M."/>
            <person name="Chang C.H."/>
            <person name="Lee J.M."/>
            <person name="Toriumi M.J."/>
            <person name="Chan M.M."/>
            <person name="Tang C.C."/>
            <person name="Onodera C.S."/>
            <person name="Deng J.M."/>
            <person name="Akiyama K."/>
            <person name="Ansari Y."/>
            <person name="Arakawa T."/>
            <person name="Banh J."/>
            <person name="Banno F."/>
            <person name="Bowser L."/>
            <person name="Brooks S.Y."/>
            <person name="Carninci P."/>
            <person name="Chao Q."/>
            <person name="Choy N."/>
            <person name="Enju A."/>
            <person name="Goldsmith A.D."/>
            <person name="Gurjal M."/>
            <person name="Hansen N.F."/>
            <person name="Hayashizaki Y."/>
            <person name="Johnson-Hopson C."/>
            <person name="Hsuan V.W."/>
            <person name="Iida K."/>
            <person name="Karnes M."/>
            <person name="Khan S."/>
            <person name="Koesema E."/>
            <person name="Ishida J."/>
            <person name="Jiang P.X."/>
            <person name="Jones T."/>
            <person name="Kawai J."/>
            <person name="Kamiya A."/>
            <person name="Meyers C."/>
            <person name="Nakajima M."/>
            <person name="Narusaka M."/>
            <person name="Seki M."/>
            <person name="Sakurai T."/>
            <person name="Satou M."/>
            <person name="Tamse R."/>
            <person name="Vaysberg M."/>
            <person name="Wallender E.K."/>
            <person name="Wong C."/>
            <person name="Yamamura Y."/>
            <person name="Yuan S."/>
            <person name="Shinozaki K."/>
            <person name="Davis R.W."/>
            <person name="Theologis A."/>
            <person name="Ecker J.R."/>
        </authorList>
    </citation>
    <scope>NUCLEOTIDE SEQUENCE [LARGE SCALE MRNA]</scope>
    <source>
        <strain>cv. Columbia</strain>
    </source>
</reference>
<reference key="5">
    <citation type="submission" date="2002-03" db="EMBL/GenBank/DDBJ databases">
        <title>Full-length cDNA from Arabidopsis thaliana.</title>
        <authorList>
            <person name="Brover V.V."/>
            <person name="Troukhan M.E."/>
            <person name="Alexandrov N.A."/>
            <person name="Lu Y.-P."/>
            <person name="Flavell R.B."/>
            <person name="Feldmann K.A."/>
        </authorList>
    </citation>
    <scope>NUCLEOTIDE SEQUENCE [LARGE SCALE MRNA]</scope>
</reference>
<reference key="6">
    <citation type="journal article" date="1993" name="Plant J.">
        <title>An inventory of 1152 expressed sequence tags obtained by partial sequencing of cDNAs from Arabidopsis thaliana.</title>
        <authorList>
            <person name="Hoefte H."/>
            <person name="Desprez T."/>
            <person name="Amselem J."/>
            <person name="Chiapello H."/>
            <person name="Rouze P."/>
            <person name="Caboche M."/>
            <person name="Moisan A."/>
            <person name="Jourjon M.-F."/>
            <person name="Charpenteau J.-L."/>
            <person name="Berthomieu P."/>
            <person name="Guerrier D."/>
            <person name="Giraudat J."/>
            <person name="Quigley F."/>
            <person name="Thomas F."/>
            <person name="Yu D.-Y."/>
            <person name="Mache R."/>
            <person name="Raynal M."/>
            <person name="Cooke R."/>
            <person name="Grellet F."/>
            <person name="Delseny M."/>
            <person name="Parmentier Y."/>
            <person name="de Marcillac G."/>
            <person name="Gigot C."/>
            <person name="Fleck J."/>
            <person name="Philipps G."/>
            <person name="Axelos M."/>
            <person name="Bardet C."/>
            <person name="Tremousaygue D."/>
            <person name="Lescure B."/>
        </authorList>
    </citation>
    <scope>NUCLEOTIDE SEQUENCE [LARGE SCALE MRNA] OF 1-63</scope>
    <source>
        <strain>cv. Columbia</strain>
        <tissue>Seedling</tissue>
    </source>
</reference>
<reference key="7">
    <citation type="journal article" date="1996" name="Genetics">
        <title>Structure and evolution of the actin gene family in Arabidopsis thaliana.</title>
        <authorList>
            <person name="McDowell J.M."/>
            <person name="Huang S."/>
            <person name="McKinney E.C."/>
            <person name="An Y.-Q."/>
            <person name="Meagher R.B."/>
        </authorList>
    </citation>
    <scope>GENE FAMILY ORGANIZATION</scope>
    <scope>CHARACTERIZATION</scope>
    <source>
        <strain>cv. Columbia</strain>
    </source>
</reference>
<reference key="8">
    <citation type="journal article" date="2012" name="Mol. Cell. Proteomics">
        <title>Comparative large-scale characterisation of plant vs. mammal proteins reveals similar and idiosyncratic N-alpha acetylation features.</title>
        <authorList>
            <person name="Bienvenut W.V."/>
            <person name="Sumpton D."/>
            <person name="Martinez A."/>
            <person name="Lilla S."/>
            <person name="Espagne C."/>
            <person name="Meinnel T."/>
            <person name="Giglione C."/>
        </authorList>
    </citation>
    <scope>ACETYLATION [LARGE SCALE ANALYSIS] AT ALA-2</scope>
    <scope>CLEAVAGE OF INITIATOR METHIONINE [LARGE SCALE ANALYSIS]</scope>
    <scope>IDENTIFICATION BY MASS SPECTROMETRY [LARGE SCALE ANALYSIS]</scope>
</reference>
<gene>
    <name type="primary">ACT2</name>
    <name type="ordered locus">At3g18780</name>
    <name type="ORF">MVE11.16</name>
</gene>
<sequence length="377" mass="41877">MAEADDIQPIVCDNGTGMVKAGFAGDDAPRAVFPSVVGRPRHHGVMVGMNQKDAYVGDEAQSKRGILTLKYPIEHGVVSNWDDMEKIWHHTFYNELRIAPEEHPVLLTEAPLNPKANREKMTQIMFETFNSPAMYVAIQAVLSLYASGRTTGIVLDSGDGVSHTVPIYEGFSLPHAILRLDLAGRDLTDYLMKILTERGYMFTTTAEREIVRDIKEKLSFVAVDYEQEMETSKTSSSIEKNYELPDGQVITIGAERFRCPEVLFQPSFVGMEAAGIHETTYNSIMKCDVDIRKDLYGNIVLSGGTTMFSGIADRMSKEITALAPSSMKIKVVAPPERKYSVWIGGSILASLSTFQQMWISKAEYDEAGPGIVHRKCF</sequence>
<feature type="initiator methionine" description="Removed" evidence="3">
    <location>
        <position position="1"/>
    </location>
</feature>
<feature type="chain" id="PRO_0000088889" description="Actin-2">
    <location>
        <begin position="2"/>
        <end position="377"/>
    </location>
</feature>
<feature type="modified residue" description="N-acetylalanine" evidence="3">
    <location>
        <position position="2"/>
    </location>
</feature>
<comment type="function">
    <text>Actins are highly conserved proteins that are involved in various types of cell motility and are ubiquitously expressed in all eukaryotic cells. Essential component of cell cytoskeleton; plays an important role in cytoplasmic streaming, cell shape determination, cell division, organelle movement and extension growth. This is considered as one of the vegetative actins.</text>
</comment>
<comment type="catalytic activity">
    <reaction evidence="1">
        <text>ATP + H2O = ADP + phosphate + H(+)</text>
        <dbReference type="Rhea" id="RHEA:13065"/>
        <dbReference type="ChEBI" id="CHEBI:15377"/>
        <dbReference type="ChEBI" id="CHEBI:15378"/>
        <dbReference type="ChEBI" id="CHEBI:30616"/>
        <dbReference type="ChEBI" id="CHEBI:43474"/>
        <dbReference type="ChEBI" id="CHEBI:456216"/>
    </reaction>
</comment>
<comment type="activity regulation">
    <text>Subject to negative translational control in pollen.</text>
</comment>
<comment type="subunit">
    <text>Polymerization of globular actin (G-actin) leads to a structural filament (F-actin) in the form of a two-stranded helix. The binding of profilin to monomeric G-actin cause the sequestration of actin into profilactin complexes, and prevents the polymerization.</text>
</comment>
<comment type="interaction">
    <interactant intactId="EBI-1644538">
        <id>Q96292</id>
    </interactant>
    <interactant intactId="EBI-1644489">
        <id>Q42525</id>
        <label>HXK1</label>
    </interactant>
    <organismsDiffer>false</organismsDiffer>
    <experiments>2</experiments>
</comment>
<comment type="subcellular location">
    <subcellularLocation>
        <location>Cytoplasm</location>
        <location>Cytoskeleton</location>
    </subcellularLocation>
</comment>
<comment type="alternative products">
    <event type="alternative splicing"/>
    <isoform>
        <id>Q96292-1</id>
        <name>1</name>
        <sequence type="displayed"/>
    </isoform>
    <text>A number of isoforms are produced. According to EST sequences.</text>
</comment>
<comment type="tissue specificity">
    <text>Strongly expressed in nearly all vegetative tissues, and remains high in older tissues. Little or no expression is detected in mature pollen sacs, ovules, embryos or seeds.</text>
</comment>
<comment type="miscellaneous">
    <text>There are 8 actin genes in A.thaliana.</text>
</comment>
<comment type="similarity">
    <text evidence="2">Belongs to the actin family.</text>
</comment>
<keyword id="KW-0007">Acetylation</keyword>
<keyword id="KW-0025">Alternative splicing</keyword>
<keyword id="KW-0067">ATP-binding</keyword>
<keyword id="KW-0963">Cytoplasm</keyword>
<keyword id="KW-0206">Cytoskeleton</keyword>
<keyword id="KW-0378">Hydrolase</keyword>
<keyword id="KW-0547">Nucleotide-binding</keyword>
<keyword id="KW-1185">Reference proteome</keyword>
<name>ACT2_ARATH</name>